<feature type="chain" id="PRO_1000196308" description="Small ribosomal subunit protein bS16">
    <location>
        <begin position="1"/>
        <end position="86"/>
    </location>
</feature>
<name>RS16_ACIF5</name>
<protein>
    <recommendedName>
        <fullName evidence="1">Small ribosomal subunit protein bS16</fullName>
    </recommendedName>
    <alternativeName>
        <fullName evidence="2">30S ribosomal protein S16</fullName>
    </alternativeName>
</protein>
<accession>B5EPD0</accession>
<proteinExistence type="inferred from homology"/>
<keyword id="KW-0687">Ribonucleoprotein</keyword>
<keyword id="KW-0689">Ribosomal protein</keyword>
<reference key="1">
    <citation type="submission" date="2008-08" db="EMBL/GenBank/DDBJ databases">
        <title>Complete sequence of Acidithiobacillus ferrooxidans ATCC 53993.</title>
        <authorList>
            <person name="Lucas S."/>
            <person name="Copeland A."/>
            <person name="Lapidus A."/>
            <person name="Glavina del Rio T."/>
            <person name="Dalin E."/>
            <person name="Tice H."/>
            <person name="Bruce D."/>
            <person name="Goodwin L."/>
            <person name="Pitluck S."/>
            <person name="Sims D."/>
            <person name="Brettin T."/>
            <person name="Detter J.C."/>
            <person name="Han C."/>
            <person name="Kuske C.R."/>
            <person name="Larimer F."/>
            <person name="Land M."/>
            <person name="Hauser L."/>
            <person name="Kyrpides N."/>
            <person name="Lykidis A."/>
            <person name="Borole A.P."/>
        </authorList>
    </citation>
    <scope>NUCLEOTIDE SEQUENCE [LARGE SCALE GENOMIC DNA]</scope>
    <source>
        <strain>ATCC 53993 / BNL-5-31</strain>
    </source>
</reference>
<gene>
    <name evidence="1" type="primary">rpsP</name>
    <name type="ordered locus">Lferr_2476</name>
</gene>
<dbReference type="EMBL" id="CP001132">
    <property type="protein sequence ID" value="ACH84671.1"/>
    <property type="molecule type" value="Genomic_DNA"/>
</dbReference>
<dbReference type="RefSeq" id="WP_009568284.1">
    <property type="nucleotide sequence ID" value="NC_011206.1"/>
</dbReference>
<dbReference type="SMR" id="B5EPD0"/>
<dbReference type="GeneID" id="65281882"/>
<dbReference type="KEGG" id="afe:Lferr_2476"/>
<dbReference type="eggNOG" id="COG0228">
    <property type="taxonomic scope" value="Bacteria"/>
</dbReference>
<dbReference type="HOGENOM" id="CLU_100590_5_0_6"/>
<dbReference type="GO" id="GO:0005737">
    <property type="term" value="C:cytoplasm"/>
    <property type="evidence" value="ECO:0007669"/>
    <property type="project" value="UniProtKB-ARBA"/>
</dbReference>
<dbReference type="GO" id="GO:0015935">
    <property type="term" value="C:small ribosomal subunit"/>
    <property type="evidence" value="ECO:0007669"/>
    <property type="project" value="TreeGrafter"/>
</dbReference>
<dbReference type="GO" id="GO:0003735">
    <property type="term" value="F:structural constituent of ribosome"/>
    <property type="evidence" value="ECO:0007669"/>
    <property type="project" value="InterPro"/>
</dbReference>
<dbReference type="GO" id="GO:0006412">
    <property type="term" value="P:translation"/>
    <property type="evidence" value="ECO:0007669"/>
    <property type="project" value="UniProtKB-UniRule"/>
</dbReference>
<dbReference type="Gene3D" id="3.30.1320.10">
    <property type="match status" value="1"/>
</dbReference>
<dbReference type="HAMAP" id="MF_00385">
    <property type="entry name" value="Ribosomal_bS16"/>
    <property type="match status" value="1"/>
</dbReference>
<dbReference type="InterPro" id="IPR000307">
    <property type="entry name" value="Ribosomal_bS16"/>
</dbReference>
<dbReference type="InterPro" id="IPR023803">
    <property type="entry name" value="Ribosomal_bS16_dom_sf"/>
</dbReference>
<dbReference type="NCBIfam" id="TIGR00002">
    <property type="entry name" value="S16"/>
    <property type="match status" value="1"/>
</dbReference>
<dbReference type="PANTHER" id="PTHR12919">
    <property type="entry name" value="30S RIBOSOMAL PROTEIN S16"/>
    <property type="match status" value="1"/>
</dbReference>
<dbReference type="PANTHER" id="PTHR12919:SF20">
    <property type="entry name" value="SMALL RIBOSOMAL SUBUNIT PROTEIN BS16M"/>
    <property type="match status" value="1"/>
</dbReference>
<dbReference type="Pfam" id="PF00886">
    <property type="entry name" value="Ribosomal_S16"/>
    <property type="match status" value="1"/>
</dbReference>
<dbReference type="SUPFAM" id="SSF54565">
    <property type="entry name" value="Ribosomal protein S16"/>
    <property type="match status" value="1"/>
</dbReference>
<evidence type="ECO:0000255" key="1">
    <source>
        <dbReference type="HAMAP-Rule" id="MF_00385"/>
    </source>
</evidence>
<evidence type="ECO:0000305" key="2"/>
<organism>
    <name type="scientific">Acidithiobacillus ferrooxidans (strain ATCC 53993 / BNL-5-31)</name>
    <name type="common">Leptospirillum ferrooxidans (ATCC 53993)</name>
    <dbReference type="NCBI Taxonomy" id="380394"/>
    <lineage>
        <taxon>Bacteria</taxon>
        <taxon>Pseudomonadati</taxon>
        <taxon>Pseudomonadota</taxon>
        <taxon>Acidithiobacillia</taxon>
        <taxon>Acidithiobacillales</taxon>
        <taxon>Acidithiobacillaceae</taxon>
        <taxon>Acidithiobacillus</taxon>
    </lineage>
</organism>
<sequence>MVVIRMARGGAKKRPFYHIVVADSRSRRDGRFIERLGFYNPIGAVAELRIDKERAAYWLSQGAQPSDTVAGFLKKEGVSKTGVASV</sequence>
<comment type="similarity">
    <text evidence="1">Belongs to the bacterial ribosomal protein bS16 family.</text>
</comment>